<keyword id="KW-0972">Capsule biogenesis/degradation</keyword>
<keyword id="KW-0520">NAD</keyword>
<keyword id="KW-0560">Oxidoreductase</keyword>
<keyword id="KW-0597">Phosphoprotein</keyword>
<organism>
    <name type="scientific">Escherichia coli</name>
    <dbReference type="NCBI Taxonomy" id="562"/>
    <lineage>
        <taxon>Bacteria</taxon>
        <taxon>Pseudomonadati</taxon>
        <taxon>Pseudomonadota</taxon>
        <taxon>Gammaproteobacteria</taxon>
        <taxon>Enterobacterales</taxon>
        <taxon>Enterobacteriaceae</taxon>
        <taxon>Escherichia</taxon>
    </lineage>
</organism>
<comment type="function">
    <text>Catalyzes the formation of UDP-glucuronic acid which is required for K5 capsule synthesis.</text>
</comment>
<comment type="catalytic activity">
    <reaction>
        <text>UDP-alpha-D-glucose + 2 NAD(+) + H2O = UDP-alpha-D-glucuronate + 2 NADH + 3 H(+)</text>
        <dbReference type="Rhea" id="RHEA:23596"/>
        <dbReference type="ChEBI" id="CHEBI:15377"/>
        <dbReference type="ChEBI" id="CHEBI:15378"/>
        <dbReference type="ChEBI" id="CHEBI:57540"/>
        <dbReference type="ChEBI" id="CHEBI:57945"/>
        <dbReference type="ChEBI" id="CHEBI:58052"/>
        <dbReference type="ChEBI" id="CHEBI:58885"/>
        <dbReference type="EC" id="1.1.1.22"/>
    </reaction>
</comment>
<comment type="pathway">
    <text>Nucleotide-sugar biosynthesis; UDP-alpha-D-glucuronate biosynthesis; UDP-alpha-D-glucuronate from UDP-alpha-D-glucose: step 1/1.</text>
</comment>
<comment type="pathway">
    <text>Capsule biogenesis; capsule polysaccharide biosynthesis.</text>
</comment>
<comment type="PTM">
    <text evidence="1">Phosphorylated on a tyrosine residue. It results in a significant increase of the dehydrogenase activity (By similarity).</text>
</comment>
<comment type="similarity">
    <text evidence="4">Belongs to the UDP-glucose/GDP-mannose dehydrogenase family.</text>
</comment>
<gene>
    <name type="primary">kfiD</name>
</gene>
<protein>
    <recommendedName>
        <fullName>UDP-glucose 6-dehydrogenase</fullName>
        <shortName>UDP-Glc dehydrogenase</shortName>
        <shortName>UDP-GlcDH</shortName>
        <shortName>UDPGDH</shortName>
        <ecNumber>1.1.1.22</ecNumber>
    </recommendedName>
</protein>
<feature type="chain" id="PRO_0000074045" description="UDP-glucose 6-dehydrogenase">
    <location>
        <begin position="1"/>
        <end position="392"/>
    </location>
</feature>
<feature type="active site" description="Nucleophile" evidence="2">
    <location>
        <position position="257"/>
    </location>
</feature>
<feature type="binding site" evidence="3">
    <location>
        <begin position="6"/>
        <end position="23"/>
    </location>
    <ligand>
        <name>NAD(+)</name>
        <dbReference type="ChEBI" id="CHEBI:57540"/>
    </ligand>
</feature>
<feature type="binding site" evidence="2">
    <location>
        <position position="15"/>
    </location>
    <ligand>
        <name>NAD(+)</name>
        <dbReference type="ChEBI" id="CHEBI:57540"/>
    </ligand>
</feature>
<feature type="binding site" evidence="2">
    <location>
        <position position="33"/>
    </location>
    <ligand>
        <name>NAD(+)</name>
        <dbReference type="ChEBI" id="CHEBI:57540"/>
    </ligand>
</feature>
<feature type="binding site" evidence="2">
    <location>
        <position position="38"/>
    </location>
    <ligand>
        <name>NAD(+)</name>
        <dbReference type="ChEBI" id="CHEBI:57540"/>
    </ligand>
</feature>
<feature type="binding site" evidence="2">
    <location>
        <position position="87"/>
    </location>
    <ligand>
        <name>NAD(+)</name>
        <dbReference type="ChEBI" id="CHEBI:57540"/>
    </ligand>
</feature>
<feature type="binding site" evidence="2">
    <location>
        <position position="122"/>
    </location>
    <ligand>
        <name>NAD(+)</name>
        <dbReference type="ChEBI" id="CHEBI:57540"/>
    </ligand>
</feature>
<feature type="binding site" evidence="2">
    <location>
        <begin position="145"/>
        <end position="149"/>
    </location>
    <ligand>
        <name>substrate</name>
    </ligand>
</feature>
<feature type="binding site" evidence="2">
    <location>
        <position position="149"/>
    </location>
    <ligand>
        <name>NAD(+)</name>
        <dbReference type="ChEBI" id="CHEBI:57540"/>
    </ligand>
</feature>
<feature type="binding site" evidence="2">
    <location>
        <position position="201"/>
    </location>
    <ligand>
        <name>substrate</name>
    </ligand>
</feature>
<feature type="binding site" evidence="2">
    <location>
        <position position="205"/>
    </location>
    <ligand>
        <name>substrate</name>
    </ligand>
</feature>
<feature type="binding site" evidence="2">
    <location>
        <begin position="246"/>
        <end position="250"/>
    </location>
    <ligand>
        <name>substrate</name>
    </ligand>
</feature>
<feature type="binding site" evidence="2">
    <location>
        <position position="254"/>
    </location>
    <ligand>
        <name>substrate</name>
    </ligand>
</feature>
<feature type="binding site" evidence="2">
    <location>
        <position position="256"/>
    </location>
    <ligand>
        <name>NAD(+)</name>
        <dbReference type="ChEBI" id="CHEBI:57540"/>
    </ligand>
</feature>
<feature type="binding site" evidence="2">
    <location>
        <position position="260"/>
    </location>
    <ligand>
        <name>NAD(+)</name>
        <dbReference type="ChEBI" id="CHEBI:57540"/>
    </ligand>
</feature>
<feature type="binding site" evidence="2">
    <location>
        <position position="311"/>
    </location>
    <ligand>
        <name>substrate</name>
    </ligand>
</feature>
<feature type="binding site" evidence="2">
    <location>
        <position position="318"/>
    </location>
    <ligand>
        <name>NAD(+)</name>
        <dbReference type="ChEBI" id="CHEBI:57540"/>
    </ligand>
</feature>
<sequence>MFGTLKITVSGAGYVGLSNGILMAQNHEVVAFDTHQKKVDLLNDKLSPIEDKEIENYLSTKILNFRATTNKYEAYKNANYVIIATPTNYDPGSNYFDTSSVEAVIRDVTEINPNAIMVVKSTVPVGFTKTIKEHLGINNIIFSPEFLREGRALYDNLHPSRIIIGECSERAERLAVLFQEGAIKQNIPVLFTDSTEAEAIKLFSNTYLAMRVAFFNELDSYAESFGLNTRQIIDGVCLDPRIGNYYNNPSFGYGGYCLPKDTKQLLANYQSVPNKLISAIVDANRTRKDFITNVILKHRPQVVGVYRLIMKSGSDNFRDSSILGIIKRIKKKGVKVIIYEPLISGDTFFNSPLERELAIFKGKADIIITNRMSEELNDVVDKVYSRDLFKCD</sequence>
<reference key="1">
    <citation type="journal article" date="1995" name="Mol. Microbiol.">
        <title>Region 2 of the Escherichia coli K5 capsule gene cluster encoding proteins for the biosynthesis of the K5 polysaccharide.</title>
        <authorList>
            <person name="Petit C."/>
            <person name="Rigg G."/>
            <person name="Pazzani C."/>
            <person name="Smith A."/>
            <person name="Sieberth V."/>
            <person name="Stevens M."/>
            <person name="Boulnois G."/>
            <person name="Jann K."/>
            <person name="Roberts I.S."/>
        </authorList>
    </citation>
    <scope>NUCLEOTIDE SEQUENCE [GENOMIC DNA]</scope>
    <source>
        <strain>K5</strain>
    </source>
</reference>
<name>UDG5_ECOLX</name>
<evidence type="ECO:0000250" key="1"/>
<evidence type="ECO:0000250" key="2">
    <source>
        <dbReference type="UniProtKB" id="Q0P8H3"/>
    </source>
</evidence>
<evidence type="ECO:0000255" key="3"/>
<evidence type="ECO:0000305" key="4"/>
<dbReference type="EC" id="1.1.1.22"/>
<dbReference type="EMBL" id="X77617">
    <property type="protein sequence ID" value="CAA54708.1"/>
    <property type="molecule type" value="Genomic_DNA"/>
</dbReference>
<dbReference type="PIR" id="S70197">
    <property type="entry name" value="S70197"/>
</dbReference>
<dbReference type="RefSeq" id="WP_001305084.1">
    <property type="nucleotide sequence ID" value="NZ_WSZB01000003.1"/>
</dbReference>
<dbReference type="SMR" id="Q47329"/>
<dbReference type="OMA" id="CATPMEA"/>
<dbReference type="UniPathway" id="UPA00038">
    <property type="reaction ID" value="UER00491"/>
</dbReference>
<dbReference type="UniPathway" id="UPA00934"/>
<dbReference type="GO" id="GO:0051287">
    <property type="term" value="F:NAD binding"/>
    <property type="evidence" value="ECO:0000250"/>
    <property type="project" value="UniProtKB"/>
</dbReference>
<dbReference type="GO" id="GO:0003979">
    <property type="term" value="F:UDP-glucose 6-dehydrogenase activity"/>
    <property type="evidence" value="ECO:0000250"/>
    <property type="project" value="UniProtKB"/>
</dbReference>
<dbReference type="GO" id="GO:0045227">
    <property type="term" value="P:capsule polysaccharide biosynthetic process"/>
    <property type="evidence" value="ECO:0007669"/>
    <property type="project" value="UniProtKB-UniPathway"/>
</dbReference>
<dbReference type="GO" id="GO:0006065">
    <property type="term" value="P:UDP-glucuronate biosynthetic process"/>
    <property type="evidence" value="ECO:0007669"/>
    <property type="project" value="UniProtKB-UniPathway"/>
</dbReference>
<dbReference type="FunFam" id="1.10.1040.10:FF:000026">
    <property type="entry name" value="UDP-glucose 6-dehydrogenase"/>
    <property type="match status" value="1"/>
</dbReference>
<dbReference type="Gene3D" id="1.10.1040.10">
    <property type="entry name" value="N-(1-d-carboxylethyl)-l-norvaline Dehydrogenase, domain 2"/>
    <property type="match status" value="1"/>
</dbReference>
<dbReference type="Gene3D" id="3.40.50.720">
    <property type="entry name" value="NAD(P)-binding Rossmann-like Domain"/>
    <property type="match status" value="2"/>
</dbReference>
<dbReference type="InterPro" id="IPR008927">
    <property type="entry name" value="6-PGluconate_DH-like_C_sf"/>
</dbReference>
<dbReference type="InterPro" id="IPR013328">
    <property type="entry name" value="6PGD_dom2"/>
</dbReference>
<dbReference type="InterPro" id="IPR036291">
    <property type="entry name" value="NAD(P)-bd_dom_sf"/>
</dbReference>
<dbReference type="InterPro" id="IPR017476">
    <property type="entry name" value="UDP-Glc/GDP-Man"/>
</dbReference>
<dbReference type="InterPro" id="IPR014027">
    <property type="entry name" value="UDP-Glc/GDP-Man_DH_C"/>
</dbReference>
<dbReference type="InterPro" id="IPR036220">
    <property type="entry name" value="UDP-Glc/GDP-Man_DH_C_sf"/>
</dbReference>
<dbReference type="InterPro" id="IPR014026">
    <property type="entry name" value="UDP-Glc/GDP-Man_DH_dimer"/>
</dbReference>
<dbReference type="InterPro" id="IPR001732">
    <property type="entry name" value="UDP-Glc/GDP-Man_DH_N"/>
</dbReference>
<dbReference type="InterPro" id="IPR028357">
    <property type="entry name" value="UDPglc_DH_bac"/>
</dbReference>
<dbReference type="NCBIfam" id="TIGR03026">
    <property type="entry name" value="NDP-sugDHase"/>
    <property type="match status" value="1"/>
</dbReference>
<dbReference type="PANTHER" id="PTHR43750:SF2">
    <property type="entry name" value="UDP-GLUCOSE 6-DEHYDROGENASE"/>
    <property type="match status" value="1"/>
</dbReference>
<dbReference type="PANTHER" id="PTHR43750">
    <property type="entry name" value="UDP-GLUCOSE 6-DEHYDROGENASE TUAD"/>
    <property type="match status" value="1"/>
</dbReference>
<dbReference type="Pfam" id="PF00984">
    <property type="entry name" value="UDPG_MGDP_dh"/>
    <property type="match status" value="1"/>
</dbReference>
<dbReference type="Pfam" id="PF03720">
    <property type="entry name" value="UDPG_MGDP_dh_C"/>
    <property type="match status" value="1"/>
</dbReference>
<dbReference type="Pfam" id="PF03721">
    <property type="entry name" value="UDPG_MGDP_dh_N"/>
    <property type="match status" value="1"/>
</dbReference>
<dbReference type="PIRSF" id="PIRSF500134">
    <property type="entry name" value="UDPglc_DH_bac"/>
    <property type="match status" value="1"/>
</dbReference>
<dbReference type="PIRSF" id="PIRSF000124">
    <property type="entry name" value="UDPglc_GDPman_dh"/>
    <property type="match status" value="1"/>
</dbReference>
<dbReference type="SMART" id="SM00984">
    <property type="entry name" value="UDPG_MGDP_dh_C"/>
    <property type="match status" value="1"/>
</dbReference>
<dbReference type="SUPFAM" id="SSF48179">
    <property type="entry name" value="6-phosphogluconate dehydrogenase C-terminal domain-like"/>
    <property type="match status" value="1"/>
</dbReference>
<dbReference type="SUPFAM" id="SSF51735">
    <property type="entry name" value="NAD(P)-binding Rossmann-fold domains"/>
    <property type="match status" value="1"/>
</dbReference>
<dbReference type="SUPFAM" id="SSF52413">
    <property type="entry name" value="UDP-glucose/GDP-mannose dehydrogenase C-terminal domain"/>
    <property type="match status" value="1"/>
</dbReference>
<proteinExistence type="inferred from homology"/>
<accession>Q47329</accession>